<feature type="chain" id="PRO_1000066739" description="Uridylate kinase">
    <location>
        <begin position="1"/>
        <end position="241"/>
    </location>
</feature>
<feature type="region of interest" description="Involved in allosteric activation by GTP" evidence="1">
    <location>
        <begin position="23"/>
        <end position="28"/>
    </location>
</feature>
<feature type="binding site" evidence="1">
    <location>
        <begin position="15"/>
        <end position="18"/>
    </location>
    <ligand>
        <name>ATP</name>
        <dbReference type="ChEBI" id="CHEBI:30616"/>
    </ligand>
</feature>
<feature type="binding site" evidence="1">
    <location>
        <position position="57"/>
    </location>
    <ligand>
        <name>UMP</name>
        <dbReference type="ChEBI" id="CHEBI:57865"/>
    </ligand>
</feature>
<feature type="binding site" evidence="1">
    <location>
        <position position="58"/>
    </location>
    <ligand>
        <name>ATP</name>
        <dbReference type="ChEBI" id="CHEBI:30616"/>
    </ligand>
</feature>
<feature type="binding site" evidence="1">
    <location>
        <position position="62"/>
    </location>
    <ligand>
        <name>ATP</name>
        <dbReference type="ChEBI" id="CHEBI:30616"/>
    </ligand>
</feature>
<feature type="binding site" evidence="1">
    <location>
        <position position="77"/>
    </location>
    <ligand>
        <name>UMP</name>
        <dbReference type="ChEBI" id="CHEBI:57865"/>
    </ligand>
</feature>
<feature type="binding site" evidence="1">
    <location>
        <begin position="138"/>
        <end position="145"/>
    </location>
    <ligand>
        <name>UMP</name>
        <dbReference type="ChEBI" id="CHEBI:57865"/>
    </ligand>
</feature>
<feature type="binding site" evidence="1">
    <location>
        <position position="165"/>
    </location>
    <ligand>
        <name>ATP</name>
        <dbReference type="ChEBI" id="CHEBI:30616"/>
    </ligand>
</feature>
<feature type="binding site" evidence="1">
    <location>
        <position position="171"/>
    </location>
    <ligand>
        <name>ATP</name>
        <dbReference type="ChEBI" id="CHEBI:30616"/>
    </ligand>
</feature>
<feature type="binding site" evidence="1">
    <location>
        <position position="174"/>
    </location>
    <ligand>
        <name>ATP</name>
        <dbReference type="ChEBI" id="CHEBI:30616"/>
    </ligand>
</feature>
<name>PYRH_ECO24</name>
<protein>
    <recommendedName>
        <fullName evidence="1">Uridylate kinase</fullName>
        <shortName evidence="1">UK</shortName>
        <ecNumber evidence="1">2.7.4.22</ecNumber>
    </recommendedName>
    <alternativeName>
        <fullName evidence="1">Uridine monophosphate kinase</fullName>
        <shortName evidence="1">UMP kinase</shortName>
        <shortName evidence="1">UMPK</shortName>
    </alternativeName>
</protein>
<accession>A7ZHR1</accession>
<sequence length="241" mass="25970">MATNAKPVYKRILLKLSGEALQGTEGFGIDASILDRMAQEIKELVELGIQVGVVIGGGNLFRGAGLAKAGMNRVVGDHMGMLATVMNGLAMRDALHRAYVNARLMSAIPLNGVCDSYSWAEAISLLRNNRVVILSAGTGNPFFTTDSAACLRGIEIEADVVLKATKVDGVFTADPAKDPTATMYEQLTYSEVLEKELKVMDLAAFTLARDHKLPIRVFNMNKPGALRRVVMGEKEGTLITE</sequence>
<proteinExistence type="inferred from homology"/>
<comment type="function">
    <text evidence="1">Catalyzes the reversible phosphorylation of UMP to UDP.</text>
</comment>
<comment type="catalytic activity">
    <reaction evidence="1">
        <text>UMP + ATP = UDP + ADP</text>
        <dbReference type="Rhea" id="RHEA:24400"/>
        <dbReference type="ChEBI" id="CHEBI:30616"/>
        <dbReference type="ChEBI" id="CHEBI:57865"/>
        <dbReference type="ChEBI" id="CHEBI:58223"/>
        <dbReference type="ChEBI" id="CHEBI:456216"/>
        <dbReference type="EC" id="2.7.4.22"/>
    </reaction>
</comment>
<comment type="activity regulation">
    <text evidence="1">Allosterically activated by GTP. Inhibited by UTP.</text>
</comment>
<comment type="pathway">
    <text evidence="1">Pyrimidine metabolism; CTP biosynthesis via de novo pathway; UDP from UMP (UMPK route): step 1/1.</text>
</comment>
<comment type="subunit">
    <text evidence="1">Homohexamer.</text>
</comment>
<comment type="subcellular location">
    <subcellularLocation>
        <location evidence="1">Cytoplasm</location>
    </subcellularLocation>
</comment>
<comment type="similarity">
    <text evidence="1">Belongs to the UMP kinase family.</text>
</comment>
<gene>
    <name evidence="1" type="primary">pyrH</name>
    <name type="ordered locus">EcE24377A_0175</name>
</gene>
<dbReference type="EC" id="2.7.4.22" evidence="1"/>
<dbReference type="EMBL" id="CP000800">
    <property type="protein sequence ID" value="ABV17582.1"/>
    <property type="molecule type" value="Genomic_DNA"/>
</dbReference>
<dbReference type="RefSeq" id="WP_000224573.1">
    <property type="nucleotide sequence ID" value="NC_009801.1"/>
</dbReference>
<dbReference type="SMR" id="A7ZHR1"/>
<dbReference type="GeneID" id="93777254"/>
<dbReference type="KEGG" id="ecw:EcE24377A_0175"/>
<dbReference type="HOGENOM" id="CLU_033861_0_0_6"/>
<dbReference type="UniPathway" id="UPA00159">
    <property type="reaction ID" value="UER00275"/>
</dbReference>
<dbReference type="Proteomes" id="UP000001122">
    <property type="component" value="Chromosome"/>
</dbReference>
<dbReference type="GO" id="GO:0005829">
    <property type="term" value="C:cytosol"/>
    <property type="evidence" value="ECO:0007669"/>
    <property type="project" value="TreeGrafter"/>
</dbReference>
<dbReference type="GO" id="GO:0005524">
    <property type="term" value="F:ATP binding"/>
    <property type="evidence" value="ECO:0007669"/>
    <property type="project" value="UniProtKB-KW"/>
</dbReference>
<dbReference type="GO" id="GO:0033862">
    <property type="term" value="F:UMP kinase activity"/>
    <property type="evidence" value="ECO:0007669"/>
    <property type="project" value="UniProtKB-EC"/>
</dbReference>
<dbReference type="GO" id="GO:0044210">
    <property type="term" value="P:'de novo' CTP biosynthetic process"/>
    <property type="evidence" value="ECO:0007669"/>
    <property type="project" value="UniProtKB-UniRule"/>
</dbReference>
<dbReference type="GO" id="GO:0006225">
    <property type="term" value="P:UDP biosynthetic process"/>
    <property type="evidence" value="ECO:0007669"/>
    <property type="project" value="TreeGrafter"/>
</dbReference>
<dbReference type="CDD" id="cd04254">
    <property type="entry name" value="AAK_UMPK-PyrH-Ec"/>
    <property type="match status" value="1"/>
</dbReference>
<dbReference type="FunFam" id="3.40.1160.10:FF:000001">
    <property type="entry name" value="Uridylate kinase"/>
    <property type="match status" value="1"/>
</dbReference>
<dbReference type="Gene3D" id="3.40.1160.10">
    <property type="entry name" value="Acetylglutamate kinase-like"/>
    <property type="match status" value="1"/>
</dbReference>
<dbReference type="HAMAP" id="MF_01220_B">
    <property type="entry name" value="PyrH_B"/>
    <property type="match status" value="1"/>
</dbReference>
<dbReference type="InterPro" id="IPR036393">
    <property type="entry name" value="AceGlu_kinase-like_sf"/>
</dbReference>
<dbReference type="InterPro" id="IPR001048">
    <property type="entry name" value="Asp/Glu/Uridylate_kinase"/>
</dbReference>
<dbReference type="InterPro" id="IPR011817">
    <property type="entry name" value="Uridylate_kinase"/>
</dbReference>
<dbReference type="InterPro" id="IPR015963">
    <property type="entry name" value="Uridylate_kinase_bac"/>
</dbReference>
<dbReference type="NCBIfam" id="TIGR02075">
    <property type="entry name" value="pyrH_bact"/>
    <property type="match status" value="1"/>
</dbReference>
<dbReference type="PANTHER" id="PTHR42833">
    <property type="entry name" value="URIDYLATE KINASE"/>
    <property type="match status" value="1"/>
</dbReference>
<dbReference type="PANTHER" id="PTHR42833:SF4">
    <property type="entry name" value="URIDYLATE KINASE PUMPKIN, CHLOROPLASTIC"/>
    <property type="match status" value="1"/>
</dbReference>
<dbReference type="Pfam" id="PF00696">
    <property type="entry name" value="AA_kinase"/>
    <property type="match status" value="1"/>
</dbReference>
<dbReference type="PIRSF" id="PIRSF005650">
    <property type="entry name" value="Uridylate_kin"/>
    <property type="match status" value="1"/>
</dbReference>
<dbReference type="SUPFAM" id="SSF53633">
    <property type="entry name" value="Carbamate kinase-like"/>
    <property type="match status" value="1"/>
</dbReference>
<organism>
    <name type="scientific">Escherichia coli O139:H28 (strain E24377A / ETEC)</name>
    <dbReference type="NCBI Taxonomy" id="331111"/>
    <lineage>
        <taxon>Bacteria</taxon>
        <taxon>Pseudomonadati</taxon>
        <taxon>Pseudomonadota</taxon>
        <taxon>Gammaproteobacteria</taxon>
        <taxon>Enterobacterales</taxon>
        <taxon>Enterobacteriaceae</taxon>
        <taxon>Escherichia</taxon>
    </lineage>
</organism>
<evidence type="ECO:0000255" key="1">
    <source>
        <dbReference type="HAMAP-Rule" id="MF_01220"/>
    </source>
</evidence>
<reference key="1">
    <citation type="journal article" date="2008" name="J. Bacteriol.">
        <title>The pangenome structure of Escherichia coli: comparative genomic analysis of E. coli commensal and pathogenic isolates.</title>
        <authorList>
            <person name="Rasko D.A."/>
            <person name="Rosovitz M.J."/>
            <person name="Myers G.S.A."/>
            <person name="Mongodin E.F."/>
            <person name="Fricke W.F."/>
            <person name="Gajer P."/>
            <person name="Crabtree J."/>
            <person name="Sebaihia M."/>
            <person name="Thomson N.R."/>
            <person name="Chaudhuri R."/>
            <person name="Henderson I.R."/>
            <person name="Sperandio V."/>
            <person name="Ravel J."/>
        </authorList>
    </citation>
    <scope>NUCLEOTIDE SEQUENCE [LARGE SCALE GENOMIC DNA]</scope>
    <source>
        <strain>E24377A / ETEC</strain>
    </source>
</reference>
<keyword id="KW-0021">Allosteric enzyme</keyword>
<keyword id="KW-0067">ATP-binding</keyword>
<keyword id="KW-0963">Cytoplasm</keyword>
<keyword id="KW-0418">Kinase</keyword>
<keyword id="KW-0547">Nucleotide-binding</keyword>
<keyword id="KW-0665">Pyrimidine biosynthesis</keyword>
<keyword id="KW-1185">Reference proteome</keyword>
<keyword id="KW-0808">Transferase</keyword>